<comment type="function">
    <text evidence="1">Forms part of the ribosomal stalk which helps the ribosome interact with GTP-bound translation factors. Is thus essential for accurate translation.</text>
</comment>
<comment type="subunit">
    <text evidence="1">Homodimer. Part of the ribosomal stalk of the 50S ribosomal subunit. Forms a multimeric L10(L12)X complex, where L10 forms an elongated spine to which 2 to 4 L12 dimers bind in a sequential fashion. Binds GTP-bound translation factors.</text>
</comment>
<comment type="similarity">
    <text evidence="1">Belongs to the bacterial ribosomal protein bL12 family.</text>
</comment>
<evidence type="ECO:0000255" key="1">
    <source>
        <dbReference type="HAMAP-Rule" id="MF_00368"/>
    </source>
</evidence>
<evidence type="ECO:0000305" key="2"/>
<reference key="1">
    <citation type="submission" date="2007-03" db="EMBL/GenBank/DDBJ databases">
        <title>Complete sequence of chromosome 1 of Burkholderia vietnamiensis G4.</title>
        <authorList>
            <consortium name="US DOE Joint Genome Institute"/>
            <person name="Copeland A."/>
            <person name="Lucas S."/>
            <person name="Lapidus A."/>
            <person name="Barry K."/>
            <person name="Detter J.C."/>
            <person name="Glavina del Rio T."/>
            <person name="Hammon N."/>
            <person name="Israni S."/>
            <person name="Dalin E."/>
            <person name="Tice H."/>
            <person name="Pitluck S."/>
            <person name="Chain P."/>
            <person name="Malfatti S."/>
            <person name="Shin M."/>
            <person name="Vergez L."/>
            <person name="Schmutz J."/>
            <person name="Larimer F."/>
            <person name="Land M."/>
            <person name="Hauser L."/>
            <person name="Kyrpides N."/>
            <person name="Tiedje J."/>
            <person name="Richardson P."/>
        </authorList>
    </citation>
    <scope>NUCLEOTIDE SEQUENCE [LARGE SCALE GENOMIC DNA]</scope>
    <source>
        <strain>G4 / LMG 22486</strain>
    </source>
</reference>
<keyword id="KW-0687">Ribonucleoprotein</keyword>
<keyword id="KW-0689">Ribosomal protein</keyword>
<feature type="chain" id="PRO_1000006976" description="Large ribosomal subunit protein bL12">
    <location>
        <begin position="1"/>
        <end position="123"/>
    </location>
</feature>
<accession>A4JAN1</accession>
<sequence>MAIAKEDILAAVEGMTVLELNELVKAFEEKFGVSAAAVAVAGPAGGAAAAVEEKTEFTVVLTEAGSNKVAVIKAVRELTGLGLKEAKDVVDGAPKAVKEGVDKAAAEEAKKKLEEAGAKVEVK</sequence>
<dbReference type="EMBL" id="CP000614">
    <property type="protein sequence ID" value="ABO53334.1"/>
    <property type="molecule type" value="Genomic_DNA"/>
</dbReference>
<dbReference type="SMR" id="A4JAN1"/>
<dbReference type="KEGG" id="bvi:Bcep1808_0321"/>
<dbReference type="eggNOG" id="COG0222">
    <property type="taxonomic scope" value="Bacteria"/>
</dbReference>
<dbReference type="HOGENOM" id="CLU_086499_3_2_4"/>
<dbReference type="Proteomes" id="UP000002287">
    <property type="component" value="Chromosome 1"/>
</dbReference>
<dbReference type="GO" id="GO:0022625">
    <property type="term" value="C:cytosolic large ribosomal subunit"/>
    <property type="evidence" value="ECO:0007669"/>
    <property type="project" value="TreeGrafter"/>
</dbReference>
<dbReference type="GO" id="GO:0003729">
    <property type="term" value="F:mRNA binding"/>
    <property type="evidence" value="ECO:0007669"/>
    <property type="project" value="TreeGrafter"/>
</dbReference>
<dbReference type="GO" id="GO:0003735">
    <property type="term" value="F:structural constituent of ribosome"/>
    <property type="evidence" value="ECO:0007669"/>
    <property type="project" value="InterPro"/>
</dbReference>
<dbReference type="GO" id="GO:0006412">
    <property type="term" value="P:translation"/>
    <property type="evidence" value="ECO:0007669"/>
    <property type="project" value="UniProtKB-UniRule"/>
</dbReference>
<dbReference type="CDD" id="cd00387">
    <property type="entry name" value="Ribosomal_L7_L12"/>
    <property type="match status" value="1"/>
</dbReference>
<dbReference type="FunFam" id="3.30.1390.10:FF:000001">
    <property type="entry name" value="50S ribosomal protein L7/L12"/>
    <property type="match status" value="1"/>
</dbReference>
<dbReference type="Gene3D" id="3.30.1390.10">
    <property type="match status" value="1"/>
</dbReference>
<dbReference type="Gene3D" id="1.20.5.710">
    <property type="entry name" value="Single helix bin"/>
    <property type="match status" value="1"/>
</dbReference>
<dbReference type="HAMAP" id="MF_00368">
    <property type="entry name" value="Ribosomal_bL12"/>
    <property type="match status" value="1"/>
</dbReference>
<dbReference type="InterPro" id="IPR000206">
    <property type="entry name" value="Ribosomal_bL12"/>
</dbReference>
<dbReference type="InterPro" id="IPR013823">
    <property type="entry name" value="Ribosomal_bL12_C"/>
</dbReference>
<dbReference type="InterPro" id="IPR014719">
    <property type="entry name" value="Ribosomal_bL12_C/ClpS-like"/>
</dbReference>
<dbReference type="InterPro" id="IPR008932">
    <property type="entry name" value="Ribosomal_bL12_oligo"/>
</dbReference>
<dbReference type="InterPro" id="IPR036235">
    <property type="entry name" value="Ribosomal_bL12_oligo_N_sf"/>
</dbReference>
<dbReference type="NCBIfam" id="TIGR00855">
    <property type="entry name" value="L12"/>
    <property type="match status" value="1"/>
</dbReference>
<dbReference type="PANTHER" id="PTHR45987">
    <property type="entry name" value="39S RIBOSOMAL PROTEIN L12"/>
    <property type="match status" value="1"/>
</dbReference>
<dbReference type="PANTHER" id="PTHR45987:SF4">
    <property type="entry name" value="LARGE RIBOSOMAL SUBUNIT PROTEIN BL12M"/>
    <property type="match status" value="1"/>
</dbReference>
<dbReference type="Pfam" id="PF00542">
    <property type="entry name" value="Ribosomal_L12"/>
    <property type="match status" value="1"/>
</dbReference>
<dbReference type="Pfam" id="PF16320">
    <property type="entry name" value="Ribosomal_L12_N"/>
    <property type="match status" value="1"/>
</dbReference>
<dbReference type="SUPFAM" id="SSF54736">
    <property type="entry name" value="ClpS-like"/>
    <property type="match status" value="1"/>
</dbReference>
<dbReference type="SUPFAM" id="SSF48300">
    <property type="entry name" value="Ribosomal protein L7/12, oligomerisation (N-terminal) domain"/>
    <property type="match status" value="1"/>
</dbReference>
<protein>
    <recommendedName>
        <fullName evidence="1">Large ribosomal subunit protein bL12</fullName>
    </recommendedName>
    <alternativeName>
        <fullName evidence="2">50S ribosomal protein L7/L12</fullName>
    </alternativeName>
</protein>
<organism>
    <name type="scientific">Burkholderia vietnamiensis (strain G4 / LMG 22486)</name>
    <name type="common">Burkholderia cepacia (strain R1808)</name>
    <dbReference type="NCBI Taxonomy" id="269482"/>
    <lineage>
        <taxon>Bacteria</taxon>
        <taxon>Pseudomonadati</taxon>
        <taxon>Pseudomonadota</taxon>
        <taxon>Betaproteobacteria</taxon>
        <taxon>Burkholderiales</taxon>
        <taxon>Burkholderiaceae</taxon>
        <taxon>Burkholderia</taxon>
        <taxon>Burkholderia cepacia complex</taxon>
    </lineage>
</organism>
<name>RL7_BURVG</name>
<proteinExistence type="inferred from homology"/>
<gene>
    <name evidence="1" type="primary">rplL</name>
    <name type="ordered locus">Bcep1808_0321</name>
</gene>